<organism>
    <name type="scientific">Viscum album</name>
    <name type="common">European mistletoe</name>
    <dbReference type="NCBI Taxonomy" id="3972"/>
    <lineage>
        <taxon>Eukaryota</taxon>
        <taxon>Viridiplantae</taxon>
        <taxon>Streptophyta</taxon>
        <taxon>Embryophyta</taxon>
        <taxon>Tracheophyta</taxon>
        <taxon>Spermatophyta</taxon>
        <taxon>Magnoliopsida</taxon>
        <taxon>eudicotyledons</taxon>
        <taxon>Gunneridae</taxon>
        <taxon>Pentapetalae</taxon>
        <taxon>Santalales</taxon>
        <taxon>Viscaceae</taxon>
        <taxon>Viscum</taxon>
    </lineage>
</organism>
<feature type="signal peptide" evidence="3">
    <location>
        <begin position="1"/>
        <end position="26"/>
    </location>
</feature>
<feature type="chain" id="PRO_0000034137" description="Viscotoxin-A3" evidence="3">
    <location>
        <begin position="27"/>
        <end position="72"/>
    </location>
</feature>
<feature type="propeptide" id="PRO_0000459420" description="Acidic domain" evidence="7">
    <location>
        <begin position="73"/>
        <end position="111"/>
    </location>
</feature>
<feature type="disulfide bond" evidence="1 2 8 9 10">
    <location>
        <begin position="29"/>
        <end position="66"/>
    </location>
</feature>
<feature type="disulfide bond" evidence="1 2 8 9 10">
    <location>
        <begin position="30"/>
        <end position="58"/>
    </location>
</feature>
<feature type="disulfide bond" evidence="1 2 8 9 10">
    <location>
        <begin position="42"/>
        <end position="52"/>
    </location>
</feature>
<feature type="sequence conflict" description="In Ref. 2; AA sequence." evidence="7" ref="2">
    <original>DYP</original>
    <variation>YPD</variation>
    <location>
        <begin position="69"/>
        <end position="71"/>
    </location>
</feature>
<feature type="strand" evidence="11">
    <location>
        <begin position="28"/>
        <end position="32"/>
    </location>
</feature>
<feature type="helix" evidence="11">
    <location>
        <begin position="33"/>
        <end position="44"/>
    </location>
</feature>
<feature type="helix" evidence="11">
    <location>
        <begin position="49"/>
        <end position="56"/>
    </location>
</feature>
<feature type="strand" evidence="11">
    <location>
        <begin position="62"/>
        <end position="65"/>
    </location>
</feature>
<comment type="function">
    <text>Thionins are small plant proteins which are toxic to animal cells. They seem to exert their toxic effect at the level of the cell membrane. Their precise function is not known.</text>
</comment>
<comment type="subcellular location">
    <subcellularLocation>
        <location evidence="3">Secreted</location>
    </subcellularLocation>
</comment>
<comment type="similarity">
    <text evidence="7">Belongs to the plant thionin (TC 1.C.44) family.</text>
</comment>
<accession>P01538</accession>
<sequence length="111" mass="11620">MEVVRGSSLVLLVLLLGALLVSQVESKSCCPNTTGRNIYNACRLTGAPRPTCAKLSGCKIISGSTCPSDYPKFYCTLGCESSQCATNSNGDAEAVRCKTACSDLCQDVDDA</sequence>
<reference key="1">
    <citation type="journal article" date="1991" name="Eur. J. Biochem.">
        <title>Isolation and characterization of cDNAs encoding viscotoxins of mistletoe (Viscum album).</title>
        <authorList>
            <person name="Schrader G."/>
            <person name="Apel K."/>
        </authorList>
    </citation>
    <scope>NUCLEOTIDE SEQUENCE [MRNA]</scope>
</reference>
<reference key="2">
    <citation type="journal article" date="1968" name="Acta Chem. Scand.">
        <title>The amino acid sequence of oxidized viscotoxin A3 from the European mistletoe (Viscum album L, Loranthaceae).</title>
        <authorList>
            <person name="Samuelsson G."/>
            <person name="Seger L."/>
            <person name="Olson T."/>
        </authorList>
    </citation>
    <scope>PROTEIN SEQUENCE OF 27-72</scope>
    <scope>SUBCELLULAR LOCATION</scope>
</reference>
<reference key="3">
    <citation type="journal article" date="1971" name="Acta Chem. Scand.">
        <title>The disulfide bonds of viscotoxin A3 from the European mistletoe (Viscum album L., Loranthaceae).</title>
        <authorList>
            <person name="Samuelsson G."/>
            <person name="Pettersson B."/>
        </authorList>
    </citation>
    <scope>DISULFIDE BONDS</scope>
</reference>
<reference evidence="8" key="4">
    <citation type="journal article" date="2000" name="Biochem. J.">
        <title>NMR structural determination of viscotoxin A3 from Viscum album L.</title>
        <authorList>
            <person name="Romagnoli S."/>
            <person name="Ugolini R."/>
            <person name="Fogolari F."/>
            <person name="Schaller G."/>
            <person name="Urech K."/>
            <person name="Giannattasio M."/>
            <person name="Ragona L."/>
            <person name="Molinari H."/>
        </authorList>
    </citation>
    <scope>STRUCTURE BY NMR OF 73-111</scope>
    <scope>DISULFIDE BONDS</scope>
</reference>
<name>THN3_VISAL</name>
<protein>
    <recommendedName>
        <fullName evidence="4 5 6">Viscotoxin-A3</fullName>
    </recommendedName>
</protein>
<dbReference type="PIR" id="S16099">
    <property type="entry name" value="S16099"/>
</dbReference>
<dbReference type="PDB" id="1ED0">
    <property type="method" value="NMR"/>
    <property type="chains" value="A=27-72"/>
</dbReference>
<dbReference type="PDB" id="1OKH">
    <property type="method" value="X-ray"/>
    <property type="resolution" value="1.75 A"/>
    <property type="chains" value="A/B=27-72"/>
</dbReference>
<dbReference type="PDB" id="7PVB">
    <property type="method" value="NMR"/>
    <property type="chains" value="A=27-72"/>
</dbReference>
<dbReference type="PDBsum" id="1ED0"/>
<dbReference type="PDBsum" id="1OKH"/>
<dbReference type="PDBsum" id="7PVB"/>
<dbReference type="SMR" id="P01538"/>
<dbReference type="EvolutionaryTrace" id="P01538"/>
<dbReference type="GO" id="GO:0005576">
    <property type="term" value="C:extracellular region"/>
    <property type="evidence" value="ECO:0007669"/>
    <property type="project" value="UniProtKB-SubCell"/>
</dbReference>
<dbReference type="GO" id="GO:0090729">
    <property type="term" value="F:toxin activity"/>
    <property type="evidence" value="ECO:0007669"/>
    <property type="project" value="UniProtKB-KW"/>
</dbReference>
<dbReference type="GO" id="GO:0006952">
    <property type="term" value="P:defense response"/>
    <property type="evidence" value="ECO:0007669"/>
    <property type="project" value="UniProtKB-KW"/>
</dbReference>
<dbReference type="FunFam" id="3.30.1350.10:FF:000001">
    <property type="entry name" value="Hellethionin-D"/>
    <property type="match status" value="1"/>
</dbReference>
<dbReference type="Gene3D" id="3.30.1350.10">
    <property type="entry name" value="Thionin-like"/>
    <property type="match status" value="1"/>
</dbReference>
<dbReference type="InterPro" id="IPR001010">
    <property type="entry name" value="Thionin"/>
</dbReference>
<dbReference type="InterPro" id="IPR036391">
    <property type="entry name" value="Thionin-like_sf"/>
</dbReference>
<dbReference type="PANTHER" id="PTHR33920">
    <property type="entry name" value="THIONIN-2.1-RELATED"/>
    <property type="match status" value="1"/>
</dbReference>
<dbReference type="PANTHER" id="PTHR33920:SF2">
    <property type="entry name" value="THIONIN-2.1-RELATED"/>
    <property type="match status" value="1"/>
</dbReference>
<dbReference type="Pfam" id="PF00321">
    <property type="entry name" value="Thionin"/>
    <property type="match status" value="1"/>
</dbReference>
<dbReference type="PRINTS" id="PR00287">
    <property type="entry name" value="THIONIN"/>
</dbReference>
<dbReference type="SUPFAM" id="SSF57429">
    <property type="entry name" value="Crambin-like"/>
    <property type="match status" value="1"/>
</dbReference>
<dbReference type="PROSITE" id="PS00271">
    <property type="entry name" value="THIONIN"/>
    <property type="match status" value="1"/>
</dbReference>
<keyword id="KW-0002">3D-structure</keyword>
<keyword id="KW-0903">Direct protein sequencing</keyword>
<keyword id="KW-1015">Disulfide bond</keyword>
<keyword id="KW-0611">Plant defense</keyword>
<keyword id="KW-0964">Secreted</keyword>
<keyword id="KW-0732">Signal</keyword>
<keyword id="KW-0800">Toxin</keyword>
<gene>
    <name type="primary">THI2.1</name>
</gene>
<evidence type="ECO:0000269" key="1">
    <source>
    </source>
</evidence>
<evidence type="ECO:0000269" key="2">
    <source>
    </source>
</evidence>
<evidence type="ECO:0000269" key="3">
    <source>
    </source>
</evidence>
<evidence type="ECO:0000303" key="4">
    <source>
    </source>
</evidence>
<evidence type="ECO:0000303" key="5">
    <source>
    </source>
</evidence>
<evidence type="ECO:0000303" key="6">
    <source>
    </source>
</evidence>
<evidence type="ECO:0000305" key="7"/>
<evidence type="ECO:0000312" key="8">
    <source>
        <dbReference type="PDB" id="1ED0"/>
    </source>
</evidence>
<evidence type="ECO:0000312" key="9">
    <source>
        <dbReference type="PDB" id="1OKH"/>
    </source>
</evidence>
<evidence type="ECO:0000312" key="10">
    <source>
        <dbReference type="PDB" id="7PVB"/>
    </source>
</evidence>
<evidence type="ECO:0007829" key="11">
    <source>
        <dbReference type="PDB" id="1OKH"/>
    </source>
</evidence>
<proteinExistence type="evidence at protein level"/>